<gene>
    <name type="primary">PPP2R2B</name>
</gene>
<accession>Q00005</accession>
<accession>A6NEJ2</accession>
<accession>A8K102</accession>
<accession>B3KPD0</accession>
<accession>B7Z2F2</accession>
<accession>B7Z304</accession>
<accession>D3DQF7</accession>
<accession>D3DQF8</accession>
<accession>G3V149</accession>
<name>2ABB_HUMAN</name>
<feature type="chain" id="PRO_0000071421" description="Serine/threonine-protein phosphatase 2A 55 kDa regulatory subunit B beta isoform">
    <location>
        <begin position="1"/>
        <end position="443"/>
    </location>
</feature>
<feature type="repeat" description="WD 1">
    <location>
        <begin position="22"/>
        <end position="61"/>
    </location>
</feature>
<feature type="repeat" description="WD 2">
    <location>
        <begin position="87"/>
        <end position="128"/>
    </location>
</feature>
<feature type="repeat" description="WD 3">
    <location>
        <begin position="171"/>
        <end position="209"/>
    </location>
</feature>
<feature type="repeat" description="WD 4">
    <location>
        <begin position="220"/>
        <end position="260"/>
    </location>
</feature>
<feature type="repeat" description="WD 5">
    <location>
        <begin position="279"/>
        <end position="317"/>
    </location>
</feature>
<feature type="repeat" description="WD 6">
    <location>
        <begin position="334"/>
        <end position="375"/>
    </location>
</feature>
<feature type="repeat" description="WD 7">
    <location>
        <begin position="410"/>
        <end position="442"/>
    </location>
</feature>
<feature type="modified residue" description="Phosphoserine" evidence="2">
    <location>
        <position position="275"/>
    </location>
</feature>
<feature type="modified residue" description="Phosphotyrosine" evidence="2">
    <location>
        <position position="295"/>
    </location>
</feature>
<feature type="modified residue" description="Phosphothreonine" evidence="2">
    <location>
        <position position="298"/>
    </location>
</feature>
<feature type="splice variant" id="VSP_044923" description="In isoform 6." evidence="8">
    <original>MEEDIDTRKINNSFLRDHSYATE</original>
    <variation>MNYPDENTYGNK</variation>
    <location>
        <begin position="1"/>
        <end position="23"/>
    </location>
</feature>
<feature type="splice variant" id="VSP_037976" description="In isoform 2." evidence="9">
    <original>MEEDIDTRKINNSFLRDHSYA</original>
    <variation>MKCFSRYLPYIFRPPNTILSSSCH</variation>
    <location>
        <begin position="1"/>
        <end position="21"/>
    </location>
</feature>
<feature type="splice variant" id="VSP_037977" description="In isoform 3." evidence="7">
    <original>MEEDIDTRKINNSFLRDHSYA</original>
    <variation>MIPGIGTLTQDTLWCFSQVKGTIEIGT</variation>
    <location>
        <begin position="1"/>
        <end position="21"/>
    </location>
</feature>
<feature type="splice variant" id="VSP_037978" description="In isoform 4." evidence="7">
    <original>M</original>
    <variation>MVLQPSERHYRDWNHRRLGPWCSPTGSPAPLSCETGCGEGSWILVCRLLVPTQVSLLSM</variation>
    <location>
        <position position="1"/>
    </location>
</feature>
<feature type="splice variant" id="VSP_037979" description="In isoform 5." evidence="8">
    <original>M</original>
    <variation>MLLSLPALHLQTSEHHPFFQLPHRRLGPWCSPTGSPAPLSCETGCGEGSWILVCRLLVPTQVSLLSM</variation>
    <location>
        <position position="1"/>
    </location>
</feature>
<feature type="splice variant" id="VSP_045748" description="In isoform 7." evidence="7">
    <original>M</original>
    <variation>MHQPPPASCSSSSSSSSSSCECARVGVRVSALAPAAAPCPAPRQLPYPRLPEPPSRGTSTLIPARLGPWCSPTGSPAPLSCETGCGEGSWILVCRLLVPTQVSLLSM</variation>
    <location>
        <position position="1"/>
    </location>
</feature>
<feature type="sequence variant" id="VAR_051738" description="In dbSNP:rs11547494.">
    <original>G</original>
    <variation>V</variation>
    <location>
        <position position="36"/>
    </location>
</feature>
<feature type="sequence variant" id="VAR_078654" description="Found in a patient with moderate intellectual disability, autism and intractable epilepsy; uncertain significance." evidence="4">
    <original>R</original>
    <variation>P</variation>
    <location>
        <position position="138"/>
    </location>
</feature>
<feature type="sequence conflict" description="In Ref. 2; BAH11838." evidence="10" ref="2">
    <original>T</original>
    <variation>A</variation>
    <location>
        <position position="22"/>
    </location>
</feature>
<feature type="sequence conflict" description="In Ref. 5; BI669304." evidence="10" ref="5">
    <original>H</original>
    <variation>N</variation>
    <location>
        <position position="62"/>
    </location>
</feature>
<feature type="sequence conflict" description="In Ref. 2; BAH12040." evidence="10" ref="2">
    <original>S</original>
    <variation>F</variation>
    <location>
        <position position="109"/>
    </location>
</feature>
<feature type="sequence conflict" description="In Ref. 6; BI490027." evidence="10" ref="6">
    <original>T</original>
    <variation>S</variation>
    <location>
        <position position="163"/>
    </location>
</feature>
<feature type="sequence conflict" description="In Ref. 2; BAF82406." evidence="10" ref="2">
    <original>P</original>
    <variation>S</variation>
    <location>
        <position position="164"/>
    </location>
</feature>
<feature type="sequence conflict" description="In Ref. 2; BAH12040." evidence="10" ref="2">
    <original>S</original>
    <variation>R</variation>
    <location>
        <position position="292"/>
    </location>
</feature>
<sequence>MEEDIDTRKINNSFLRDHSYATEADIISTVEFNHTGELLATGDKGGRVVIFQREQESKNQVHRRGEYNVYSTFQSHEPEFDYLKSLEIEEKINKIRWLPQQNAAYFLLSTNDKTVKLWKVSERDKRPEGYNLKDEEGRLRDPATITTLRVPVLRPMDLMVEATPRRVFANAHTYHINSISVNSDYETYMSADDLRINLWNFEITNQSFNIVDIKPANMEELTEVITAAEFHPHHCNTFVYSSSKGTIRLCDMRASALCDRHTKFFEEPEDPSNRSFFSEIISSISDVKFSHSGRYIMTRDYLTVKVWDLNMENRPIETYQVHDYLRSKLCSLYENDCIFDKFECVWNGSDSVIMTGSYNNFFRMFDRNTKRDVTLEASRENSKPRAILKPRKVCVGGKRRKDEISVDSLDFSKKILHTAWHPSENIIAVAATNNLYIFQDKVN</sequence>
<comment type="function">
    <text evidence="1">The B regulatory subunit might modulate substrate selectivity and catalytic activity, and might also direct the localization of the catalytic enzyme to a particular subcellular compartment. Within the PP2A holoenzyme complex, isoform 2 is required to promote proapoptotic activity (By similarity). Isoform 2 regulates neuronal survival through the mitochondrial fission and fusion balance (By similarity).</text>
</comment>
<comment type="subunit">
    <text evidence="1 2 5 6">PP2A consists of a common heterodimeric core enzyme, composed of a 36 kDa catalytic subunit (subunit C) and a 65 kDa constant regulatory subunit (PR65 or subunit A), that associates with a variety of regulatory subunits. Proteins that associate with the core dimer include three families of regulatory subunits B (the R2/B/PR55/B55, R3/B''/PR72/PR130/PR59 and R5/B'/B56 families), the 48 kDa variable regulatory subunit, viral proteins, and cell signaling molecules (By similarity). Interacts with TOMM22 (By similarity). Interacts with IER5 (via N- and C-terminal regions) (PubMed:25816751, PubMed:26496226).</text>
</comment>
<comment type="interaction">
    <interactant intactId="EBI-1052159">
        <id>Q00005</id>
    </interactant>
    <interactant intactId="EBI-77613">
        <id>P05067</id>
        <label>APP</label>
    </interactant>
    <organismsDiffer>false</organismsDiffer>
    <experiments>3</experiments>
</comment>
<comment type="interaction">
    <interactant intactId="EBI-1052159">
        <id>Q00005</id>
    </interactant>
    <interactant intactId="EBI-717097">
        <id>O15530</id>
        <label>PDPK1</label>
    </interactant>
    <organismsDiffer>false</organismsDiffer>
    <experiments>8</experiments>
</comment>
<comment type="interaction">
    <interactant intactId="EBI-1052159">
        <id>Q00005</id>
    </interactant>
    <interactant intactId="EBI-302388">
        <id>P30153</id>
        <label>PPP2R1A</label>
    </interactant>
    <organismsDiffer>false</organismsDiffer>
    <experiments>12</experiments>
</comment>
<comment type="interaction">
    <interactant intactId="EBI-1052159">
        <id>Q00005</id>
    </interactant>
    <interactant intactId="EBI-1775921">
        <id>P23443</id>
        <label>RPS6KB1</label>
    </interactant>
    <organismsDiffer>false</organismsDiffer>
    <experiments>2</experiments>
</comment>
<comment type="subcellular location">
    <molecule>Isoform 1</molecule>
    <subcellularLocation>
        <location evidence="1">Cytoplasm</location>
    </subcellularLocation>
    <subcellularLocation>
        <location evidence="1">Cytoplasm</location>
        <location evidence="1">Cytoskeleton</location>
    </subcellularLocation>
    <subcellularLocation>
        <location evidence="1">Membrane</location>
    </subcellularLocation>
</comment>
<comment type="subcellular location">
    <molecule>Isoform 2</molecule>
    <subcellularLocation>
        <location evidence="1">Cytoplasm</location>
    </subcellularLocation>
    <subcellularLocation>
        <location evidence="1">Mitochondrion</location>
    </subcellularLocation>
    <subcellularLocation>
        <location evidence="1">Mitochondrion outer membrane</location>
    </subcellularLocation>
    <text evidence="1">Under basal conditions, localizes to both cytosolic and mitochondrial compartments. Relocalizes from the cytosolic to the mitochondrial compartment during apoptosis. Its targeting to the outer mitochondrial membrane (OMM) involves an association with import receptors of the TOM complex and is required to promote proapoptotic activity (By similarity).</text>
</comment>
<comment type="alternative products">
    <event type="alternative splicing"/>
    <isoform>
        <id>Q00005-1</id>
        <name>1</name>
        <name>Bbeta</name>
        <name>Bbeta1</name>
        <sequence type="displayed"/>
    </isoform>
    <isoform>
        <id>Q00005-2</id>
        <name>2</name>
        <name>Bbeta2</name>
        <sequence type="described" ref="VSP_037976"/>
    </isoform>
    <isoform>
        <id>Q00005-3</id>
        <name>3</name>
        <sequence type="described" ref="VSP_037977"/>
    </isoform>
    <isoform>
        <id>Q00005-4</id>
        <name>4</name>
        <sequence type="described" ref="VSP_037978"/>
    </isoform>
    <isoform>
        <id>Q00005-5</id>
        <name>5</name>
        <sequence type="described" ref="VSP_037979"/>
    </isoform>
    <isoform>
        <id>Q00005-6</id>
        <name>6</name>
        <sequence type="described" ref="VSP_044923"/>
    </isoform>
    <isoform>
        <id>Q00005-7</id>
        <name>7</name>
        <sequence type="described" ref="VSP_045748"/>
    </isoform>
</comment>
<comment type="tissue specificity">
    <text>Brain.</text>
</comment>
<comment type="domain">
    <text evidence="1">The N-terminal 26 residues of isoform 2 constitute a cryptic mitochondrial matrix import signal with critical basic and hydrophobic residues, that is necessary and sufficient for targeting the PP2A holoenzyme to the outer mitochondrial membrane (OMM) and does not affect holoenzyme formation or catalytic activity.</text>
</comment>
<comment type="domain">
    <text evidence="1">The last WD repeat of isoform 2 constitutes a mitochondrial stop-transfer domain that confers resistance to the unfolding step process required for import and therefore prevents PPP2R2B matrix translocation and signal sequence cleavage.</text>
</comment>
<comment type="disease" evidence="3">
    <disease id="DI-01075">
        <name>Spinocerebellar ataxia 12</name>
        <acronym>SCA12</acronym>
        <description>Spinocerebellar ataxia is a clinically and genetically heterogeneous group of cerebellar disorders. Patients show progressive incoordination of gait and often poor coordination of hands, speech and eye movements, due to degeneration of the cerebellum with variable involvement of the brainstem and spinal cord. SCA12 is an autosomal dominant cerebellar ataxia (ADCA).</description>
        <dbReference type="MIM" id="604326"/>
    </disease>
    <text>The disease is caused by variants affecting the gene represented in this entry.</text>
</comment>
<comment type="miscellaneous">
    <molecule>Isoform 1</molecule>
    <text>Conserved additional ATG codons are found 5' of the putative initiator codon in transcripts supporting isoform 1. They may initiate the translation of upstream short open reading frames altering the expression of that isoform as described in PubMed:1849734.</text>
</comment>
<comment type="miscellaneous">
    <molecule>Isoform 2</molecule>
    <text evidence="1">Contains a cryptic mitochondrial transit peptide at positions 1-26.</text>
</comment>
<comment type="similarity">
    <text evidence="10">Belongs to the phosphatase 2A regulatory subunit B family.</text>
</comment>
<comment type="sequence caution" evidence="10">
    <conflict type="erroneous initiation">
        <sequence resource="EMBL-CDS" id="AAH31790"/>
    </conflict>
    <text>Truncated N-terminus.</text>
</comment>
<comment type="sequence caution" evidence="10">
    <conflict type="erroneous initiation">
        <sequence resource="EMBL-CDS" id="BAG51642"/>
    </conflict>
    <text>Truncated N-terminus.</text>
</comment>
<comment type="sequence caution" evidence="10">
    <conflict type="erroneous termination">
        <sequence resource="EMBL-CDS" id="BAG51642"/>
    </conflict>
    <text>Truncated C-terminus.</text>
</comment>
<evidence type="ECO:0000250" key="1"/>
<evidence type="ECO:0000250" key="2">
    <source>
        <dbReference type="UniProtKB" id="P36877"/>
    </source>
</evidence>
<evidence type="ECO:0000269" key="3">
    <source>
    </source>
</evidence>
<evidence type="ECO:0000269" key="4">
    <source>
    </source>
</evidence>
<evidence type="ECO:0000269" key="5">
    <source>
    </source>
</evidence>
<evidence type="ECO:0000269" key="6">
    <source>
    </source>
</evidence>
<evidence type="ECO:0000303" key="7">
    <source>
    </source>
</evidence>
<evidence type="ECO:0000303" key="8">
    <source>
    </source>
</evidence>
<evidence type="ECO:0000303" key="9">
    <source ref="6"/>
</evidence>
<evidence type="ECO:0000305" key="10"/>
<keyword id="KW-0025">Alternative splicing</keyword>
<keyword id="KW-0053">Apoptosis</keyword>
<keyword id="KW-0963">Cytoplasm</keyword>
<keyword id="KW-0206">Cytoskeleton</keyword>
<keyword id="KW-0225">Disease variant</keyword>
<keyword id="KW-0472">Membrane</keyword>
<keyword id="KW-0496">Mitochondrion</keyword>
<keyword id="KW-1000">Mitochondrion outer membrane</keyword>
<keyword id="KW-0523">Neurodegeneration</keyword>
<keyword id="KW-0597">Phosphoprotein</keyword>
<keyword id="KW-1267">Proteomics identification</keyword>
<keyword id="KW-1185">Reference proteome</keyword>
<keyword id="KW-0677">Repeat</keyword>
<keyword id="KW-0950">Spinocerebellar ataxia</keyword>
<keyword id="KW-0853">WD repeat</keyword>
<organism>
    <name type="scientific">Homo sapiens</name>
    <name type="common">Human</name>
    <dbReference type="NCBI Taxonomy" id="9606"/>
    <lineage>
        <taxon>Eukaryota</taxon>
        <taxon>Metazoa</taxon>
        <taxon>Chordata</taxon>
        <taxon>Craniata</taxon>
        <taxon>Vertebrata</taxon>
        <taxon>Euteleostomi</taxon>
        <taxon>Mammalia</taxon>
        <taxon>Eutheria</taxon>
        <taxon>Euarchontoglires</taxon>
        <taxon>Primates</taxon>
        <taxon>Haplorrhini</taxon>
        <taxon>Catarrhini</taxon>
        <taxon>Hominidae</taxon>
        <taxon>Homo</taxon>
    </lineage>
</organism>
<reference key="1">
    <citation type="journal article" date="1991" name="Biochemistry">
        <title>Structure of the 55-kDa regulatory subunit of protein phosphatase 2A: evidence for a neuronal-specific isoform.</title>
        <authorList>
            <person name="Mayer R.E."/>
            <person name="Hendrix P."/>
            <person name="Cron P."/>
            <person name="Matthies R."/>
            <person name="Stone S.R."/>
            <person name="Goris J."/>
            <person name="Merlevede W."/>
            <person name="Hofsteenge J."/>
            <person name="Hemmings B.A."/>
        </authorList>
    </citation>
    <scope>NUCLEOTIDE SEQUENCE [MRNA] (ISOFORM 1)</scope>
    <source>
        <tissue>Fetal brain</tissue>
    </source>
</reference>
<reference key="2">
    <citation type="journal article" date="2004" name="Nat. Genet.">
        <title>Complete sequencing and characterization of 21,243 full-length human cDNAs.</title>
        <authorList>
            <person name="Ota T."/>
            <person name="Suzuki Y."/>
            <person name="Nishikawa T."/>
            <person name="Otsuki T."/>
            <person name="Sugiyama T."/>
            <person name="Irie R."/>
            <person name="Wakamatsu A."/>
            <person name="Hayashi K."/>
            <person name="Sato H."/>
            <person name="Nagai K."/>
            <person name="Kimura K."/>
            <person name="Makita H."/>
            <person name="Sekine M."/>
            <person name="Obayashi M."/>
            <person name="Nishi T."/>
            <person name="Shibahara T."/>
            <person name="Tanaka T."/>
            <person name="Ishii S."/>
            <person name="Yamamoto J."/>
            <person name="Saito K."/>
            <person name="Kawai Y."/>
            <person name="Isono Y."/>
            <person name="Nakamura Y."/>
            <person name="Nagahari K."/>
            <person name="Murakami K."/>
            <person name="Yasuda T."/>
            <person name="Iwayanagi T."/>
            <person name="Wagatsuma M."/>
            <person name="Shiratori A."/>
            <person name="Sudo H."/>
            <person name="Hosoiri T."/>
            <person name="Kaku Y."/>
            <person name="Kodaira H."/>
            <person name="Kondo H."/>
            <person name="Sugawara M."/>
            <person name="Takahashi M."/>
            <person name="Kanda K."/>
            <person name="Yokoi T."/>
            <person name="Furuya T."/>
            <person name="Kikkawa E."/>
            <person name="Omura Y."/>
            <person name="Abe K."/>
            <person name="Kamihara K."/>
            <person name="Katsuta N."/>
            <person name="Sato K."/>
            <person name="Tanikawa M."/>
            <person name="Yamazaki M."/>
            <person name="Ninomiya K."/>
            <person name="Ishibashi T."/>
            <person name="Yamashita H."/>
            <person name="Murakawa K."/>
            <person name="Fujimori K."/>
            <person name="Tanai H."/>
            <person name="Kimata M."/>
            <person name="Watanabe M."/>
            <person name="Hiraoka S."/>
            <person name="Chiba Y."/>
            <person name="Ishida S."/>
            <person name="Ono Y."/>
            <person name="Takiguchi S."/>
            <person name="Watanabe S."/>
            <person name="Yosida M."/>
            <person name="Hotuta T."/>
            <person name="Kusano J."/>
            <person name="Kanehori K."/>
            <person name="Takahashi-Fujii A."/>
            <person name="Hara H."/>
            <person name="Tanase T.-O."/>
            <person name="Nomura Y."/>
            <person name="Togiya S."/>
            <person name="Komai F."/>
            <person name="Hara R."/>
            <person name="Takeuchi K."/>
            <person name="Arita M."/>
            <person name="Imose N."/>
            <person name="Musashino K."/>
            <person name="Yuuki H."/>
            <person name="Oshima A."/>
            <person name="Sasaki N."/>
            <person name="Aotsuka S."/>
            <person name="Yoshikawa Y."/>
            <person name="Matsunawa H."/>
            <person name="Ichihara T."/>
            <person name="Shiohata N."/>
            <person name="Sano S."/>
            <person name="Moriya S."/>
            <person name="Momiyama H."/>
            <person name="Satoh N."/>
            <person name="Takami S."/>
            <person name="Terashima Y."/>
            <person name="Suzuki O."/>
            <person name="Nakagawa S."/>
            <person name="Senoh A."/>
            <person name="Mizoguchi H."/>
            <person name="Goto Y."/>
            <person name="Shimizu F."/>
            <person name="Wakebe H."/>
            <person name="Hishigaki H."/>
            <person name="Watanabe T."/>
            <person name="Sugiyama A."/>
            <person name="Takemoto M."/>
            <person name="Kawakami B."/>
            <person name="Yamazaki M."/>
            <person name="Watanabe K."/>
            <person name="Kumagai A."/>
            <person name="Itakura S."/>
            <person name="Fukuzumi Y."/>
            <person name="Fujimori Y."/>
            <person name="Komiyama M."/>
            <person name="Tashiro H."/>
            <person name="Tanigami A."/>
            <person name="Fujiwara T."/>
            <person name="Ono T."/>
            <person name="Yamada K."/>
            <person name="Fujii Y."/>
            <person name="Ozaki K."/>
            <person name="Hirao M."/>
            <person name="Ohmori Y."/>
            <person name="Kawabata A."/>
            <person name="Hikiji T."/>
            <person name="Kobatake N."/>
            <person name="Inagaki H."/>
            <person name="Ikema Y."/>
            <person name="Okamoto S."/>
            <person name="Okitani R."/>
            <person name="Kawakami T."/>
            <person name="Noguchi S."/>
            <person name="Itoh T."/>
            <person name="Shigeta K."/>
            <person name="Senba T."/>
            <person name="Matsumura K."/>
            <person name="Nakajima Y."/>
            <person name="Mizuno T."/>
            <person name="Morinaga M."/>
            <person name="Sasaki M."/>
            <person name="Togashi T."/>
            <person name="Oyama M."/>
            <person name="Hata H."/>
            <person name="Watanabe M."/>
            <person name="Komatsu T."/>
            <person name="Mizushima-Sugano J."/>
            <person name="Satoh T."/>
            <person name="Shirai Y."/>
            <person name="Takahashi Y."/>
            <person name="Nakagawa K."/>
            <person name="Okumura K."/>
            <person name="Nagase T."/>
            <person name="Nomura N."/>
            <person name="Kikuchi H."/>
            <person name="Masuho Y."/>
            <person name="Yamashita R."/>
            <person name="Nakai K."/>
            <person name="Yada T."/>
            <person name="Nakamura Y."/>
            <person name="Ohara O."/>
            <person name="Isogai T."/>
            <person name="Sugano S."/>
        </authorList>
    </citation>
    <scope>NUCLEOTIDE SEQUENCE [LARGE SCALE MRNA] (ISOFORMS 1; 3 AND 4)</scope>
    <scope>NUCLEOTIDE SEQUENCE [LARGE SCALE MRNA] OF 14-433 (ISOFORM 7)</scope>
    <source>
        <tissue>Brain</tissue>
        <tissue>Corpus callosum</tissue>
    </source>
</reference>
<reference key="3">
    <citation type="journal article" date="2004" name="Nature">
        <title>The DNA sequence and comparative analysis of human chromosome 5.</title>
        <authorList>
            <person name="Schmutz J."/>
            <person name="Martin J."/>
            <person name="Terry A."/>
            <person name="Couronne O."/>
            <person name="Grimwood J."/>
            <person name="Lowry S."/>
            <person name="Gordon L.A."/>
            <person name="Scott D."/>
            <person name="Xie G."/>
            <person name="Huang W."/>
            <person name="Hellsten U."/>
            <person name="Tran-Gyamfi M."/>
            <person name="She X."/>
            <person name="Prabhakar S."/>
            <person name="Aerts A."/>
            <person name="Altherr M."/>
            <person name="Bajorek E."/>
            <person name="Black S."/>
            <person name="Branscomb E."/>
            <person name="Caoile C."/>
            <person name="Challacombe J.F."/>
            <person name="Chan Y.M."/>
            <person name="Denys M."/>
            <person name="Detter J.C."/>
            <person name="Escobar J."/>
            <person name="Flowers D."/>
            <person name="Fotopulos D."/>
            <person name="Glavina T."/>
            <person name="Gomez M."/>
            <person name="Gonzales E."/>
            <person name="Goodstein D."/>
            <person name="Grigoriev I."/>
            <person name="Groza M."/>
            <person name="Hammon N."/>
            <person name="Hawkins T."/>
            <person name="Haydu L."/>
            <person name="Israni S."/>
            <person name="Jett J."/>
            <person name="Kadner K."/>
            <person name="Kimball H."/>
            <person name="Kobayashi A."/>
            <person name="Lopez F."/>
            <person name="Lou Y."/>
            <person name="Martinez D."/>
            <person name="Medina C."/>
            <person name="Morgan J."/>
            <person name="Nandkeshwar R."/>
            <person name="Noonan J.P."/>
            <person name="Pitluck S."/>
            <person name="Pollard M."/>
            <person name="Predki P."/>
            <person name="Priest J."/>
            <person name="Ramirez L."/>
            <person name="Retterer J."/>
            <person name="Rodriguez A."/>
            <person name="Rogers S."/>
            <person name="Salamov A."/>
            <person name="Salazar A."/>
            <person name="Thayer N."/>
            <person name="Tice H."/>
            <person name="Tsai M."/>
            <person name="Ustaszewska A."/>
            <person name="Vo N."/>
            <person name="Wheeler J."/>
            <person name="Wu K."/>
            <person name="Yang J."/>
            <person name="Dickson M."/>
            <person name="Cheng J.-F."/>
            <person name="Eichler E.E."/>
            <person name="Olsen A."/>
            <person name="Pennacchio L.A."/>
            <person name="Rokhsar D.S."/>
            <person name="Richardson P."/>
            <person name="Lucas S.M."/>
            <person name="Myers R.M."/>
            <person name="Rubin E.M."/>
        </authorList>
    </citation>
    <scope>NUCLEOTIDE SEQUENCE [LARGE SCALE GENOMIC DNA]</scope>
</reference>
<reference key="4">
    <citation type="submission" date="2005-09" db="EMBL/GenBank/DDBJ databases">
        <authorList>
            <person name="Mural R.J."/>
            <person name="Istrail S."/>
            <person name="Sutton G.G."/>
            <person name="Florea L."/>
            <person name="Halpern A.L."/>
            <person name="Mobarry C.M."/>
            <person name="Lippert R."/>
            <person name="Walenz B."/>
            <person name="Shatkay H."/>
            <person name="Dew I."/>
            <person name="Miller J.R."/>
            <person name="Flanigan M.J."/>
            <person name="Edwards N.J."/>
            <person name="Bolanos R."/>
            <person name="Fasulo D."/>
            <person name="Halldorsson B.V."/>
            <person name="Hannenhalli S."/>
            <person name="Turner R."/>
            <person name="Yooseph S."/>
            <person name="Lu F."/>
            <person name="Nusskern D.R."/>
            <person name="Shue B.C."/>
            <person name="Zheng X.H."/>
            <person name="Zhong F."/>
            <person name="Delcher A.L."/>
            <person name="Huson D.H."/>
            <person name="Kravitz S.A."/>
            <person name="Mouchard L."/>
            <person name="Reinert K."/>
            <person name="Remington K.A."/>
            <person name="Clark A.G."/>
            <person name="Waterman M.S."/>
            <person name="Eichler E.E."/>
            <person name="Adams M.D."/>
            <person name="Hunkapiller M.W."/>
            <person name="Myers E.W."/>
            <person name="Venter J.C."/>
        </authorList>
    </citation>
    <scope>NUCLEOTIDE SEQUENCE [LARGE SCALE GENOMIC DNA]</scope>
</reference>
<reference key="5">
    <citation type="journal article" date="2004" name="Genome Res.">
        <title>The status, quality, and expansion of the NIH full-length cDNA project: the Mammalian Gene Collection (MGC).</title>
        <authorList>
            <consortium name="The MGC Project Team"/>
        </authorList>
    </citation>
    <scope>NUCLEOTIDE SEQUENCE [LARGE SCALE MRNA] (ISOFORM 5)</scope>
    <scope>NUCLEOTIDE SEQUENCE [LARGE SCALE MRNA] OF 1-131 (ISOFORM 6)</scope>
    <source>
        <tissue>Brain</tissue>
        <tissue>Hypothalamus</tissue>
    </source>
</reference>
<reference key="6">
    <citation type="submission" date="2001-08" db="EMBL/GenBank/DDBJ databases">
        <authorList>
            <person name="Strausberg R.L."/>
        </authorList>
    </citation>
    <scope>NUCLEOTIDE SEQUENCE [LARGE SCALE MRNA] OF 1-197 (ISOFORM 2)</scope>
</reference>
<reference key="7">
    <citation type="journal article" date="1999" name="Nat. Genet.">
        <title>Expansion of a novel CAG trinucleotide repeat in the 5' region of PPP2R2B is associated with SCA12.</title>
        <authorList>
            <person name="Holmes S.E."/>
            <person name="O'Hearn E.E."/>
            <person name="McInnis M.G."/>
            <person name="Gorelick-Feldman D.A."/>
            <person name="Kleiderlein J.J."/>
            <person name="Callahan C."/>
            <person name="Kwak N.G."/>
            <person name="Ingersoll-Ashworth R.G."/>
            <person name="Sherr M."/>
            <person name="Sumner A.J."/>
            <person name="Sharp A.H."/>
            <person name="Ananth U."/>
            <person name="Seltzer W.K."/>
            <person name="Boss M.A."/>
            <person name="Vieria-Saecker A.-M."/>
            <person name="Epplen J.T."/>
            <person name="Riess O."/>
            <person name="Ross C.A."/>
            <person name="Margolis R.L."/>
        </authorList>
    </citation>
    <scope>INVOLVEMENT IN SCA12</scope>
</reference>
<reference key="8">
    <citation type="journal article" date="2015" name="FEBS Lett.">
        <title>HSF1 transcriptional activity is modulated by IER5 and PP2A/B55.</title>
        <authorList>
            <person name="Ishikawa Y."/>
            <person name="Kawabata S."/>
            <person name="Sakurai H."/>
        </authorList>
    </citation>
    <scope>INTERACTION WITH IER5</scope>
</reference>
<reference key="9">
    <citation type="journal article" date="2015" name="FEBS Lett.">
        <title>Immediate-early response 5 (IER5) interacts with protein phosphatase 2A and regulates the phosphorylation of ribosomal protein S6 kinase and heat shock factor 1.</title>
        <authorList>
            <person name="Kawabata S."/>
            <person name="Ishita Y."/>
            <person name="Ishikawa Y."/>
            <person name="Sakurai H."/>
        </authorList>
    </citation>
    <scope>INTERACTION WITH IER5</scope>
</reference>
<reference key="10">
    <citation type="journal article" date="2014" name="PLoS Genet.">
        <title>De novo mutations in moderate or severe intellectual disability.</title>
        <authorList>
            <person name="Hamdan F.F."/>
            <person name="Srour M."/>
            <person name="Capo-Chichi J.M."/>
            <person name="Daoud H."/>
            <person name="Nassif C."/>
            <person name="Patry L."/>
            <person name="Massicotte C."/>
            <person name="Ambalavanan A."/>
            <person name="Spiegelman D."/>
            <person name="Diallo O."/>
            <person name="Henrion E."/>
            <person name="Dionne-Laporte A."/>
            <person name="Fougerat A."/>
            <person name="Pshezhetsky A.V."/>
            <person name="Venkateswaran S."/>
            <person name="Rouleau G.A."/>
            <person name="Michaud J.L."/>
        </authorList>
    </citation>
    <scope>VARIANT PRO-138</scope>
</reference>
<proteinExistence type="evidence at protein level"/>
<dbReference type="EMBL" id="M64930">
    <property type="protein sequence ID" value="AAA36493.1"/>
    <property type="molecule type" value="mRNA"/>
</dbReference>
<dbReference type="EMBL" id="AK056192">
    <property type="protein sequence ID" value="BAG51642.1"/>
    <property type="status" value="ALT_SEQ"/>
    <property type="molecule type" value="mRNA"/>
</dbReference>
<dbReference type="EMBL" id="AK289717">
    <property type="protein sequence ID" value="BAF82406.1"/>
    <property type="molecule type" value="mRNA"/>
</dbReference>
<dbReference type="EMBL" id="AK294659">
    <property type="protein sequence ID" value="BAH11838.1"/>
    <property type="molecule type" value="mRNA"/>
</dbReference>
<dbReference type="EMBL" id="AK295347">
    <property type="protein sequence ID" value="BAH12040.1"/>
    <property type="molecule type" value="mRNA"/>
</dbReference>
<dbReference type="EMBL" id="AC008728">
    <property type="status" value="NOT_ANNOTATED_CDS"/>
    <property type="molecule type" value="Genomic_DNA"/>
</dbReference>
<dbReference type="EMBL" id="AC009186">
    <property type="status" value="NOT_ANNOTATED_CDS"/>
    <property type="molecule type" value="Genomic_DNA"/>
</dbReference>
<dbReference type="EMBL" id="AC010251">
    <property type="status" value="NOT_ANNOTATED_CDS"/>
    <property type="molecule type" value="Genomic_DNA"/>
</dbReference>
<dbReference type="EMBL" id="AC011386">
    <property type="status" value="NOT_ANNOTATED_CDS"/>
    <property type="molecule type" value="Genomic_DNA"/>
</dbReference>
<dbReference type="EMBL" id="AC011357">
    <property type="status" value="NOT_ANNOTATED_CDS"/>
    <property type="molecule type" value="Genomic_DNA"/>
</dbReference>
<dbReference type="EMBL" id="AC091919">
    <property type="status" value="NOT_ANNOTATED_CDS"/>
    <property type="molecule type" value="Genomic_DNA"/>
</dbReference>
<dbReference type="EMBL" id="AC091924">
    <property type="status" value="NOT_ANNOTATED_CDS"/>
    <property type="molecule type" value="Genomic_DNA"/>
</dbReference>
<dbReference type="EMBL" id="CH471062">
    <property type="protein sequence ID" value="EAW61829.1"/>
    <property type="molecule type" value="Genomic_DNA"/>
</dbReference>
<dbReference type="EMBL" id="CH471062">
    <property type="protein sequence ID" value="EAW61831.1"/>
    <property type="molecule type" value="Genomic_DNA"/>
</dbReference>
<dbReference type="EMBL" id="CH471062">
    <property type="protein sequence ID" value="EAW61832.1"/>
    <property type="molecule type" value="Genomic_DNA"/>
</dbReference>
<dbReference type="EMBL" id="CH471062">
    <property type="protein sequence ID" value="EAW61833.1"/>
    <property type="molecule type" value="Genomic_DNA"/>
</dbReference>
<dbReference type="EMBL" id="CH471062">
    <property type="protein sequence ID" value="EAW61834.1"/>
    <property type="molecule type" value="Genomic_DNA"/>
</dbReference>
<dbReference type="EMBL" id="CH471062">
    <property type="protein sequence ID" value="EAW61835.1"/>
    <property type="molecule type" value="Genomic_DNA"/>
</dbReference>
<dbReference type="EMBL" id="BC031790">
    <property type="protein sequence ID" value="AAH31790.1"/>
    <property type="status" value="ALT_INIT"/>
    <property type="molecule type" value="mRNA"/>
</dbReference>
<dbReference type="EMBL" id="BI490027">
    <property type="status" value="NOT_ANNOTATED_CDS"/>
    <property type="molecule type" value="mRNA"/>
</dbReference>
<dbReference type="EMBL" id="BI669304">
    <property type="status" value="NOT_ANNOTATED_CDS"/>
    <property type="molecule type" value="mRNA"/>
</dbReference>
<dbReference type="CCDS" id="CCDS4283.1">
    <molecule id="Q00005-2"/>
</dbReference>
<dbReference type="CCDS" id="CCDS4284.2">
    <molecule id="Q00005-5"/>
</dbReference>
<dbReference type="CCDS" id="CCDS43380.1">
    <molecule id="Q00005-6"/>
</dbReference>
<dbReference type="CCDS" id="CCDS64281.1">
    <molecule id="Q00005-4"/>
</dbReference>
<dbReference type="CCDS" id="CCDS64282.1">
    <molecule id="Q00005-3"/>
</dbReference>
<dbReference type="CCDS" id="CCDS93800.1">
    <molecule id="Q00005-1"/>
</dbReference>
<dbReference type="PIR" id="B38351">
    <property type="entry name" value="B38351"/>
</dbReference>
<dbReference type="RefSeq" id="NP_001258828.1">
    <molecule id="Q00005-3"/>
    <property type="nucleotide sequence ID" value="NM_001271899.1"/>
</dbReference>
<dbReference type="RefSeq" id="NP_001258829.1">
    <molecule id="Q00005-4"/>
    <property type="nucleotide sequence ID" value="NM_001271900.2"/>
</dbReference>
<dbReference type="RefSeq" id="NP_001258877.1">
    <molecule id="Q00005-6"/>
    <property type="nucleotide sequence ID" value="NM_001271948.2"/>
</dbReference>
<dbReference type="RefSeq" id="NP_001415206.1">
    <molecule id="Q00005-1"/>
    <property type="nucleotide sequence ID" value="NM_001428277.1"/>
</dbReference>
<dbReference type="RefSeq" id="NP_001415208.1">
    <molecule id="Q00005-1"/>
    <property type="nucleotide sequence ID" value="NM_001428279.1"/>
</dbReference>
<dbReference type="RefSeq" id="NP_858060.2">
    <molecule id="Q00005-5"/>
    <property type="nucleotide sequence ID" value="NM_181674.3"/>
</dbReference>
<dbReference type="RefSeq" id="NP_858061.3">
    <molecule id="Q00005-1"/>
    <property type="nucleotide sequence ID" value="NM_181675.4"/>
</dbReference>
<dbReference type="RefSeq" id="NP_858062.1">
    <molecule id="Q00005-2"/>
    <property type="nucleotide sequence ID" value="NM_181676.3"/>
</dbReference>
<dbReference type="RefSeq" id="NP_858063.1">
    <property type="nucleotide sequence ID" value="NM_181677.2"/>
</dbReference>
<dbReference type="RefSeq" id="NP_858064.1">
    <molecule id="Q00005-6"/>
    <property type="nucleotide sequence ID" value="NM_181678.2"/>
</dbReference>
<dbReference type="SMR" id="Q00005"/>
<dbReference type="BioGRID" id="111513">
    <property type="interactions" value="242"/>
</dbReference>
<dbReference type="FunCoup" id="Q00005">
    <property type="interactions" value="2104"/>
</dbReference>
<dbReference type="IntAct" id="Q00005">
    <property type="interactions" value="343"/>
</dbReference>
<dbReference type="MINT" id="Q00005"/>
<dbReference type="STRING" id="9606.ENSP00000377936"/>
<dbReference type="GlyGen" id="Q00005">
    <property type="glycosylation" value="1 site, 1 O-linked glycan (1 site)"/>
</dbReference>
<dbReference type="iPTMnet" id="Q00005"/>
<dbReference type="PhosphoSitePlus" id="Q00005"/>
<dbReference type="SwissPalm" id="Q00005"/>
<dbReference type="BioMuta" id="PPP2R2B"/>
<dbReference type="DMDM" id="231446"/>
<dbReference type="jPOST" id="Q00005"/>
<dbReference type="MassIVE" id="Q00005"/>
<dbReference type="PaxDb" id="9606-ENSP00000377936"/>
<dbReference type="PeptideAtlas" id="Q00005"/>
<dbReference type="PRIDE" id="Q00005"/>
<dbReference type="ProteomicsDB" id="32258"/>
<dbReference type="ProteomicsDB" id="57832"/>
<dbReference type="ProteomicsDB" id="57833">
    <molecule id="Q00005-2"/>
</dbReference>
<dbReference type="ProteomicsDB" id="57834">
    <molecule id="Q00005-3"/>
</dbReference>
<dbReference type="ProteomicsDB" id="57835">
    <molecule id="Q00005-4"/>
</dbReference>
<dbReference type="ProteomicsDB" id="57836">
    <molecule id="Q00005-5"/>
</dbReference>
<dbReference type="Antibodypedia" id="27589">
    <property type="antibodies" value="231 antibodies from 32 providers"/>
</dbReference>
<dbReference type="DNASU" id="5521"/>
<dbReference type="Ensembl" id="ENST00000336640.10">
    <molecule id="Q00005-2"/>
    <property type="protein sequence ID" value="ENSP00000336591.6"/>
    <property type="gene ID" value="ENSG00000156475.19"/>
</dbReference>
<dbReference type="Ensembl" id="ENST00000394409.7">
    <molecule id="Q00005-1"/>
    <property type="protein sequence ID" value="ENSP00000377931.4"/>
    <property type="gene ID" value="ENSG00000156475.19"/>
</dbReference>
<dbReference type="Ensembl" id="ENST00000394411.9">
    <molecule id="Q00005-1"/>
    <property type="protein sequence ID" value="ENSP00000377933.3"/>
    <property type="gene ID" value="ENSG00000156475.19"/>
</dbReference>
<dbReference type="Ensembl" id="ENST00000394413.7">
    <molecule id="Q00005-4"/>
    <property type="protein sequence ID" value="ENSP00000377935.4"/>
    <property type="gene ID" value="ENSG00000156475.19"/>
</dbReference>
<dbReference type="Ensembl" id="ENST00000394414.5">
    <molecule id="Q00005-5"/>
    <property type="protein sequence ID" value="ENSP00000377936.1"/>
    <property type="gene ID" value="ENSG00000156475.19"/>
</dbReference>
<dbReference type="Ensembl" id="ENST00000453001.5">
    <molecule id="Q00005-6"/>
    <property type="protein sequence ID" value="ENSP00000398779.2"/>
    <property type="gene ID" value="ENSG00000156475.19"/>
</dbReference>
<dbReference type="Ensembl" id="ENST00000504198.5">
    <molecule id="Q00005-3"/>
    <property type="protein sequence ID" value="ENSP00000421396.1"/>
    <property type="gene ID" value="ENSG00000156475.19"/>
</dbReference>
<dbReference type="Ensembl" id="ENST00000508545.6">
    <molecule id="Q00005-6"/>
    <property type="protein sequence ID" value="ENSP00000431320.1"/>
    <property type="gene ID" value="ENSG00000156475.19"/>
</dbReference>
<dbReference type="GeneID" id="5521"/>
<dbReference type="KEGG" id="hsa:5521"/>
<dbReference type="MANE-Select" id="ENST00000394411.9">
    <property type="protein sequence ID" value="ENSP00000377933.3"/>
    <property type="RefSeq nucleotide sequence ID" value="NM_181675.4"/>
    <property type="RefSeq protein sequence ID" value="NP_858061.3"/>
</dbReference>
<dbReference type="UCSC" id="uc003loe.6">
    <molecule id="Q00005-1"/>
    <property type="organism name" value="human"/>
</dbReference>
<dbReference type="AGR" id="HGNC:9305"/>
<dbReference type="CTD" id="5521"/>
<dbReference type="DisGeNET" id="5521"/>
<dbReference type="GeneCards" id="PPP2R2B"/>
<dbReference type="HGNC" id="HGNC:9305">
    <property type="gene designation" value="PPP2R2B"/>
</dbReference>
<dbReference type="HPA" id="ENSG00000156475">
    <property type="expression patterns" value="Tissue enhanced (brain, retina)"/>
</dbReference>
<dbReference type="MalaCards" id="PPP2R2B"/>
<dbReference type="MIM" id="604325">
    <property type="type" value="gene"/>
</dbReference>
<dbReference type="MIM" id="604326">
    <property type="type" value="phenotype"/>
</dbReference>
<dbReference type="neXtProt" id="NX_Q00005"/>
<dbReference type="OpenTargets" id="ENSG00000156475"/>
<dbReference type="Orphanet" id="98762">
    <property type="disease" value="Spinocerebellar ataxia type 12"/>
</dbReference>
<dbReference type="PharmGKB" id="PA33669"/>
<dbReference type="VEuPathDB" id="HostDB:ENSG00000156475"/>
<dbReference type="eggNOG" id="KOG1354">
    <property type="taxonomic scope" value="Eukaryota"/>
</dbReference>
<dbReference type="GeneTree" id="ENSGT00950000182864"/>
<dbReference type="HOGENOM" id="CLU_021713_3_3_1"/>
<dbReference type="InParanoid" id="Q00005"/>
<dbReference type="OMA" id="KWCRRTN"/>
<dbReference type="OrthoDB" id="6274823at2759"/>
<dbReference type="PAN-GO" id="Q00005">
    <property type="GO annotations" value="3 GO annotations based on evolutionary models"/>
</dbReference>
<dbReference type="PhylomeDB" id="Q00005"/>
<dbReference type="TreeFam" id="TF105553"/>
<dbReference type="PathwayCommons" id="Q00005"/>
<dbReference type="SignaLink" id="Q00005"/>
<dbReference type="SIGNOR" id="Q00005"/>
<dbReference type="BioGRID-ORCS" id="5521">
    <property type="hits" value="14 hits in 1150 CRISPR screens"/>
</dbReference>
<dbReference type="ChiTaRS" id="PPP2R2B">
    <property type="organism name" value="human"/>
</dbReference>
<dbReference type="GeneWiki" id="PPP2R2B"/>
<dbReference type="GenomeRNAi" id="5521"/>
<dbReference type="Pharos" id="Q00005">
    <property type="development level" value="Tbio"/>
</dbReference>
<dbReference type="PRO" id="PR:Q00005"/>
<dbReference type="Proteomes" id="UP000005640">
    <property type="component" value="Chromosome 5"/>
</dbReference>
<dbReference type="RNAct" id="Q00005">
    <property type="molecule type" value="protein"/>
</dbReference>
<dbReference type="Bgee" id="ENSG00000156475">
    <property type="expression patterns" value="Expressed in sperm and 169 other cell types or tissues"/>
</dbReference>
<dbReference type="ExpressionAtlas" id="Q00005">
    <property type="expression patterns" value="baseline and differential"/>
</dbReference>
<dbReference type="GO" id="GO:0005856">
    <property type="term" value="C:cytoskeleton"/>
    <property type="evidence" value="ECO:0007669"/>
    <property type="project" value="UniProtKB-SubCell"/>
</dbReference>
<dbReference type="GO" id="GO:0005829">
    <property type="term" value="C:cytosol"/>
    <property type="evidence" value="ECO:0000318"/>
    <property type="project" value="GO_Central"/>
</dbReference>
<dbReference type="GO" id="GO:0005741">
    <property type="term" value="C:mitochondrial outer membrane"/>
    <property type="evidence" value="ECO:0000250"/>
    <property type="project" value="UniProtKB"/>
</dbReference>
<dbReference type="GO" id="GO:0005739">
    <property type="term" value="C:mitochondrion"/>
    <property type="evidence" value="ECO:0000250"/>
    <property type="project" value="UniProtKB"/>
</dbReference>
<dbReference type="GO" id="GO:0000159">
    <property type="term" value="C:protein phosphatase type 2A complex"/>
    <property type="evidence" value="ECO:0000318"/>
    <property type="project" value="GO_Central"/>
</dbReference>
<dbReference type="GO" id="GO:0019888">
    <property type="term" value="F:protein phosphatase regulator activity"/>
    <property type="evidence" value="ECO:0000318"/>
    <property type="project" value="GO_Central"/>
</dbReference>
<dbReference type="GO" id="GO:0006915">
    <property type="term" value="P:apoptotic process"/>
    <property type="evidence" value="ECO:0007669"/>
    <property type="project" value="UniProtKB-KW"/>
</dbReference>
<dbReference type="FunFam" id="2.130.10.10:FF:000002">
    <property type="entry name" value="Serine/threonine-protein phosphatase 2A 55 kDa regulatory subunit B"/>
    <property type="match status" value="1"/>
</dbReference>
<dbReference type="Gene3D" id="2.130.10.10">
    <property type="entry name" value="YVTN repeat-like/Quinoprotein amine dehydrogenase"/>
    <property type="match status" value="1"/>
</dbReference>
<dbReference type="InterPro" id="IPR000009">
    <property type="entry name" value="PP2A_PR55"/>
</dbReference>
<dbReference type="InterPro" id="IPR018067">
    <property type="entry name" value="PP2A_PR55_CS"/>
</dbReference>
<dbReference type="InterPro" id="IPR015943">
    <property type="entry name" value="WD40/YVTN_repeat-like_dom_sf"/>
</dbReference>
<dbReference type="InterPro" id="IPR036322">
    <property type="entry name" value="WD40_repeat_dom_sf"/>
</dbReference>
<dbReference type="InterPro" id="IPR001680">
    <property type="entry name" value="WD40_rpt"/>
</dbReference>
<dbReference type="PANTHER" id="PTHR11871">
    <property type="entry name" value="PROTEIN PHOSPHATASE PP2A REGULATORY SUBUNIT B"/>
    <property type="match status" value="1"/>
</dbReference>
<dbReference type="PIRSF" id="PIRSF037309">
    <property type="entry name" value="PP2A_PR55"/>
    <property type="match status" value="1"/>
</dbReference>
<dbReference type="PRINTS" id="PR00600">
    <property type="entry name" value="PP2APR55"/>
</dbReference>
<dbReference type="SMART" id="SM00320">
    <property type="entry name" value="WD40"/>
    <property type="match status" value="6"/>
</dbReference>
<dbReference type="SUPFAM" id="SSF50978">
    <property type="entry name" value="WD40 repeat-like"/>
    <property type="match status" value="1"/>
</dbReference>
<dbReference type="PROSITE" id="PS01024">
    <property type="entry name" value="PR55_1"/>
    <property type="match status" value="1"/>
</dbReference>
<dbReference type="PROSITE" id="PS01025">
    <property type="entry name" value="PR55_2"/>
    <property type="match status" value="1"/>
</dbReference>
<dbReference type="PROSITE" id="PS00678">
    <property type="entry name" value="WD_REPEATS_1"/>
    <property type="match status" value="1"/>
</dbReference>
<protein>
    <recommendedName>
        <fullName>Serine/threonine-protein phosphatase 2A 55 kDa regulatory subunit B beta isoform</fullName>
    </recommendedName>
    <alternativeName>
        <fullName>PP2A subunit B isoform B55-beta</fullName>
    </alternativeName>
    <alternativeName>
        <fullName>PP2A subunit B isoform PR55-beta</fullName>
    </alternativeName>
    <alternativeName>
        <fullName>PP2A subunit B isoform R2-beta</fullName>
    </alternativeName>
    <alternativeName>
        <fullName>PP2A subunit B isoform beta</fullName>
    </alternativeName>
</protein>